<dbReference type="EC" id="2.7.7.38" evidence="1"/>
<dbReference type="EMBL" id="CP000151">
    <property type="protein sequence ID" value="ABB09472.1"/>
    <property type="molecule type" value="Genomic_DNA"/>
</dbReference>
<dbReference type="RefSeq" id="WP_011352989.1">
    <property type="nucleotide sequence ID" value="NC_007510.1"/>
</dbReference>
<dbReference type="SMR" id="Q39DJ4"/>
<dbReference type="GeneID" id="45095761"/>
<dbReference type="KEGG" id="bur:Bcep18194_A5878"/>
<dbReference type="PATRIC" id="fig|482957.22.peg.2869"/>
<dbReference type="HOGENOM" id="CLU_065038_1_0_4"/>
<dbReference type="UniPathway" id="UPA00030"/>
<dbReference type="UniPathway" id="UPA00358">
    <property type="reaction ID" value="UER00476"/>
</dbReference>
<dbReference type="Proteomes" id="UP000002705">
    <property type="component" value="Chromosome 1"/>
</dbReference>
<dbReference type="GO" id="GO:0005829">
    <property type="term" value="C:cytosol"/>
    <property type="evidence" value="ECO:0007669"/>
    <property type="project" value="TreeGrafter"/>
</dbReference>
<dbReference type="GO" id="GO:0008690">
    <property type="term" value="F:3-deoxy-manno-octulosonate cytidylyltransferase activity"/>
    <property type="evidence" value="ECO:0007669"/>
    <property type="project" value="UniProtKB-UniRule"/>
</dbReference>
<dbReference type="GO" id="GO:0033468">
    <property type="term" value="P:CMP-keto-3-deoxy-D-manno-octulosonic acid biosynthetic process"/>
    <property type="evidence" value="ECO:0007669"/>
    <property type="project" value="UniProtKB-UniRule"/>
</dbReference>
<dbReference type="GO" id="GO:0009103">
    <property type="term" value="P:lipopolysaccharide biosynthetic process"/>
    <property type="evidence" value="ECO:0007669"/>
    <property type="project" value="UniProtKB-UniRule"/>
</dbReference>
<dbReference type="CDD" id="cd02517">
    <property type="entry name" value="CMP-KDO-Synthetase"/>
    <property type="match status" value="1"/>
</dbReference>
<dbReference type="FunFam" id="3.90.550.10:FF:000011">
    <property type="entry name" value="3-deoxy-manno-octulosonate cytidylyltransferase"/>
    <property type="match status" value="1"/>
</dbReference>
<dbReference type="Gene3D" id="3.90.550.10">
    <property type="entry name" value="Spore Coat Polysaccharide Biosynthesis Protein SpsA, Chain A"/>
    <property type="match status" value="1"/>
</dbReference>
<dbReference type="HAMAP" id="MF_00057">
    <property type="entry name" value="KdsB"/>
    <property type="match status" value="1"/>
</dbReference>
<dbReference type="InterPro" id="IPR003329">
    <property type="entry name" value="Cytidylyl_trans"/>
</dbReference>
<dbReference type="InterPro" id="IPR004528">
    <property type="entry name" value="KdsB"/>
</dbReference>
<dbReference type="InterPro" id="IPR029044">
    <property type="entry name" value="Nucleotide-diphossugar_trans"/>
</dbReference>
<dbReference type="NCBIfam" id="TIGR00466">
    <property type="entry name" value="kdsB"/>
    <property type="match status" value="1"/>
</dbReference>
<dbReference type="NCBIfam" id="NF003952">
    <property type="entry name" value="PRK05450.1-5"/>
    <property type="match status" value="1"/>
</dbReference>
<dbReference type="NCBIfam" id="NF009905">
    <property type="entry name" value="PRK13368.1"/>
    <property type="match status" value="1"/>
</dbReference>
<dbReference type="PANTHER" id="PTHR42866">
    <property type="entry name" value="3-DEOXY-MANNO-OCTULOSONATE CYTIDYLYLTRANSFERASE"/>
    <property type="match status" value="1"/>
</dbReference>
<dbReference type="PANTHER" id="PTHR42866:SF2">
    <property type="entry name" value="3-DEOXY-MANNO-OCTULOSONATE CYTIDYLYLTRANSFERASE, MITOCHONDRIAL"/>
    <property type="match status" value="1"/>
</dbReference>
<dbReference type="Pfam" id="PF02348">
    <property type="entry name" value="CTP_transf_3"/>
    <property type="match status" value="1"/>
</dbReference>
<dbReference type="SUPFAM" id="SSF53448">
    <property type="entry name" value="Nucleotide-diphospho-sugar transferases"/>
    <property type="match status" value="1"/>
</dbReference>
<keyword id="KW-0963">Cytoplasm</keyword>
<keyword id="KW-0448">Lipopolysaccharide biosynthesis</keyword>
<keyword id="KW-0548">Nucleotidyltransferase</keyword>
<keyword id="KW-0808">Transferase</keyword>
<gene>
    <name evidence="1" type="primary">kdsB1</name>
    <name type="ordered locus">Bcep18194_A5878</name>
</gene>
<sequence>MTQPFIAVIPARLASTRLPNKPLADLGGKPMVVRVAERAREAGAQQVLVASDAQSVLDAARDHGFEAVLTRADHPSGTDRLAEVAATLGWSDDTVVVNVQGDEPLIDPVLVRDVASHLAAHPACAIATAAHPIHDAADVFNPNVVKVALDAQSVALYFSRAPIPWSRDAYQPHWPDVAAMPAPAFPVYRHIGLYAYRARFLRTYPTLAQAPIEQAEQLEQLRALWHGERIAVLITESAPEAGIDTPADLARVQALFQPSSK</sequence>
<accession>Q39DJ4</accession>
<evidence type="ECO:0000255" key="1">
    <source>
        <dbReference type="HAMAP-Rule" id="MF_00057"/>
    </source>
</evidence>
<feature type="chain" id="PRO_0000370039" description="3-deoxy-manno-octulosonate cytidylyltransferase 1">
    <location>
        <begin position="1"/>
        <end position="261"/>
    </location>
</feature>
<organism>
    <name type="scientific">Burkholderia lata (strain ATCC 17760 / DSM 23089 / LMG 22485 / NCIMB 9086 / R18194 / 383)</name>
    <dbReference type="NCBI Taxonomy" id="482957"/>
    <lineage>
        <taxon>Bacteria</taxon>
        <taxon>Pseudomonadati</taxon>
        <taxon>Pseudomonadota</taxon>
        <taxon>Betaproteobacteria</taxon>
        <taxon>Burkholderiales</taxon>
        <taxon>Burkholderiaceae</taxon>
        <taxon>Burkholderia</taxon>
        <taxon>Burkholderia cepacia complex</taxon>
    </lineage>
</organism>
<protein>
    <recommendedName>
        <fullName evidence="1">3-deoxy-manno-octulosonate cytidylyltransferase 1</fullName>
        <ecNumber evidence="1">2.7.7.38</ecNumber>
    </recommendedName>
    <alternativeName>
        <fullName evidence="1">CMP-2-keto-3-deoxyoctulosonic acid synthase 1</fullName>
        <shortName evidence="1">CKS 1</shortName>
        <shortName evidence="1">CMP-KDO synthase 1</shortName>
    </alternativeName>
</protein>
<comment type="function">
    <text evidence="1">Activates KDO (a required 8-carbon sugar) for incorporation into bacterial lipopolysaccharide in Gram-negative bacteria.</text>
</comment>
<comment type="catalytic activity">
    <reaction evidence="1">
        <text>3-deoxy-alpha-D-manno-oct-2-ulosonate + CTP = CMP-3-deoxy-beta-D-manno-octulosonate + diphosphate</text>
        <dbReference type="Rhea" id="RHEA:23448"/>
        <dbReference type="ChEBI" id="CHEBI:33019"/>
        <dbReference type="ChEBI" id="CHEBI:37563"/>
        <dbReference type="ChEBI" id="CHEBI:85986"/>
        <dbReference type="ChEBI" id="CHEBI:85987"/>
        <dbReference type="EC" id="2.7.7.38"/>
    </reaction>
</comment>
<comment type="pathway">
    <text evidence="1">Nucleotide-sugar biosynthesis; CMP-3-deoxy-D-manno-octulosonate biosynthesis; CMP-3-deoxy-D-manno-octulosonate from 3-deoxy-D-manno-octulosonate and CTP: step 1/1.</text>
</comment>
<comment type="pathway">
    <text evidence="1">Bacterial outer membrane biogenesis; lipopolysaccharide biosynthesis.</text>
</comment>
<comment type="subcellular location">
    <subcellularLocation>
        <location evidence="1">Cytoplasm</location>
    </subcellularLocation>
</comment>
<comment type="similarity">
    <text evidence="1">Belongs to the KdsB family.</text>
</comment>
<reference key="1">
    <citation type="submission" date="2005-10" db="EMBL/GenBank/DDBJ databases">
        <title>Complete sequence of chromosome 1 of Burkholderia sp. 383.</title>
        <authorList>
            <consortium name="US DOE Joint Genome Institute"/>
            <person name="Copeland A."/>
            <person name="Lucas S."/>
            <person name="Lapidus A."/>
            <person name="Barry K."/>
            <person name="Detter J.C."/>
            <person name="Glavina T."/>
            <person name="Hammon N."/>
            <person name="Israni S."/>
            <person name="Pitluck S."/>
            <person name="Chain P."/>
            <person name="Malfatti S."/>
            <person name="Shin M."/>
            <person name="Vergez L."/>
            <person name="Schmutz J."/>
            <person name="Larimer F."/>
            <person name="Land M."/>
            <person name="Kyrpides N."/>
            <person name="Lykidis A."/>
            <person name="Richardson P."/>
        </authorList>
    </citation>
    <scope>NUCLEOTIDE SEQUENCE [LARGE SCALE GENOMIC DNA]</scope>
    <source>
        <strain>ATCC 17760 / DSM 23089 / LMG 22485 / NCIMB 9086 / R18194 / 383</strain>
    </source>
</reference>
<name>KDSB1_BURL3</name>
<proteinExistence type="inferred from homology"/>